<keyword id="KW-0963">Cytoplasm</keyword>
<keyword id="KW-0413">Isomerase</keyword>
<keyword id="KW-0627">Porphyrin biosynthesis</keyword>
<keyword id="KW-0663">Pyridoxal phosphate</keyword>
<keyword id="KW-1185">Reference proteome</keyword>
<reference key="1">
    <citation type="journal article" date="2003" name="Nature">
        <title>Genome sequence of Bacillus cereus and comparative analysis with Bacillus anthracis.</title>
        <authorList>
            <person name="Ivanova N."/>
            <person name="Sorokin A."/>
            <person name="Anderson I."/>
            <person name="Galleron N."/>
            <person name="Candelon B."/>
            <person name="Kapatral V."/>
            <person name="Bhattacharyya A."/>
            <person name="Reznik G."/>
            <person name="Mikhailova N."/>
            <person name="Lapidus A."/>
            <person name="Chu L."/>
            <person name="Mazur M."/>
            <person name="Goltsman E."/>
            <person name="Larsen N."/>
            <person name="D'Souza M."/>
            <person name="Walunas T."/>
            <person name="Grechkin Y."/>
            <person name="Pusch G."/>
            <person name="Haselkorn R."/>
            <person name="Fonstein M."/>
            <person name="Ehrlich S.D."/>
            <person name="Overbeek R."/>
            <person name="Kyrpides N.C."/>
        </authorList>
    </citation>
    <scope>NUCLEOTIDE SEQUENCE [LARGE SCALE GENOMIC DNA]</scope>
    <source>
        <strain>ATCC 14579 / DSM 31 / CCUG 7414 / JCM 2152 / NBRC 15305 / NCIMB 9373 / NCTC 2599 / NRRL B-3711</strain>
    </source>
</reference>
<dbReference type="EC" id="5.4.3.8" evidence="1"/>
<dbReference type="EMBL" id="AE016877">
    <property type="protein sequence ID" value="AAP07550.1"/>
    <property type="molecule type" value="Genomic_DNA"/>
</dbReference>
<dbReference type="RefSeq" id="NP_830349.1">
    <property type="nucleotide sequence ID" value="NC_004722.1"/>
</dbReference>
<dbReference type="SMR" id="Q81I85"/>
<dbReference type="STRING" id="226900.BC_0512"/>
<dbReference type="KEGG" id="bce:BC0512"/>
<dbReference type="PATRIC" id="fig|226900.8.peg.486"/>
<dbReference type="HOGENOM" id="CLU_016922_1_5_9"/>
<dbReference type="OrthoDB" id="9807885at2"/>
<dbReference type="UniPathway" id="UPA00251">
    <property type="reaction ID" value="UER00317"/>
</dbReference>
<dbReference type="Proteomes" id="UP000001417">
    <property type="component" value="Chromosome"/>
</dbReference>
<dbReference type="GO" id="GO:0005737">
    <property type="term" value="C:cytoplasm"/>
    <property type="evidence" value="ECO:0007669"/>
    <property type="project" value="UniProtKB-SubCell"/>
</dbReference>
<dbReference type="GO" id="GO:0042286">
    <property type="term" value="F:glutamate-1-semialdehyde 2,1-aminomutase activity"/>
    <property type="evidence" value="ECO:0007669"/>
    <property type="project" value="UniProtKB-UniRule"/>
</dbReference>
<dbReference type="GO" id="GO:0030170">
    <property type="term" value="F:pyridoxal phosphate binding"/>
    <property type="evidence" value="ECO:0007669"/>
    <property type="project" value="InterPro"/>
</dbReference>
<dbReference type="GO" id="GO:0008483">
    <property type="term" value="F:transaminase activity"/>
    <property type="evidence" value="ECO:0007669"/>
    <property type="project" value="InterPro"/>
</dbReference>
<dbReference type="GO" id="GO:0006782">
    <property type="term" value="P:protoporphyrinogen IX biosynthetic process"/>
    <property type="evidence" value="ECO:0007669"/>
    <property type="project" value="UniProtKB-UniRule"/>
</dbReference>
<dbReference type="CDD" id="cd00610">
    <property type="entry name" value="OAT_like"/>
    <property type="match status" value="1"/>
</dbReference>
<dbReference type="FunFam" id="3.40.640.10:FF:000021">
    <property type="entry name" value="Glutamate-1-semialdehyde 2,1-aminomutase"/>
    <property type="match status" value="1"/>
</dbReference>
<dbReference type="Gene3D" id="3.90.1150.10">
    <property type="entry name" value="Aspartate Aminotransferase, domain 1"/>
    <property type="match status" value="1"/>
</dbReference>
<dbReference type="Gene3D" id="3.40.640.10">
    <property type="entry name" value="Type I PLP-dependent aspartate aminotransferase-like (Major domain)"/>
    <property type="match status" value="1"/>
</dbReference>
<dbReference type="HAMAP" id="MF_00375">
    <property type="entry name" value="HemL_aminotrans_3"/>
    <property type="match status" value="1"/>
</dbReference>
<dbReference type="InterPro" id="IPR004639">
    <property type="entry name" value="4pyrrol_synth_GluAld_NH2Trfase"/>
</dbReference>
<dbReference type="InterPro" id="IPR005814">
    <property type="entry name" value="Aminotrans_3"/>
</dbReference>
<dbReference type="InterPro" id="IPR049704">
    <property type="entry name" value="Aminotrans_3_PPA_site"/>
</dbReference>
<dbReference type="InterPro" id="IPR015424">
    <property type="entry name" value="PyrdxlP-dep_Trfase"/>
</dbReference>
<dbReference type="InterPro" id="IPR015421">
    <property type="entry name" value="PyrdxlP-dep_Trfase_major"/>
</dbReference>
<dbReference type="InterPro" id="IPR015422">
    <property type="entry name" value="PyrdxlP-dep_Trfase_small"/>
</dbReference>
<dbReference type="NCBIfam" id="TIGR00713">
    <property type="entry name" value="hemL"/>
    <property type="match status" value="1"/>
</dbReference>
<dbReference type="NCBIfam" id="NF000818">
    <property type="entry name" value="PRK00062.1"/>
    <property type="match status" value="1"/>
</dbReference>
<dbReference type="NCBIfam" id="NF009055">
    <property type="entry name" value="PRK12389.1"/>
    <property type="match status" value="1"/>
</dbReference>
<dbReference type="PANTHER" id="PTHR43713">
    <property type="entry name" value="GLUTAMATE-1-SEMIALDEHYDE 2,1-AMINOMUTASE"/>
    <property type="match status" value="1"/>
</dbReference>
<dbReference type="PANTHER" id="PTHR43713:SF1">
    <property type="entry name" value="GLUTAMATE-1-SEMIALDEHYDE 2,1-AMINOMUTASE 2"/>
    <property type="match status" value="1"/>
</dbReference>
<dbReference type="Pfam" id="PF00202">
    <property type="entry name" value="Aminotran_3"/>
    <property type="match status" value="1"/>
</dbReference>
<dbReference type="SUPFAM" id="SSF53383">
    <property type="entry name" value="PLP-dependent transferases"/>
    <property type="match status" value="1"/>
</dbReference>
<dbReference type="PROSITE" id="PS00600">
    <property type="entry name" value="AA_TRANSFER_CLASS_3"/>
    <property type="match status" value="1"/>
</dbReference>
<organism>
    <name type="scientific">Bacillus cereus (strain ATCC 14579 / DSM 31 / CCUG 7414 / JCM 2152 / NBRC 15305 / NCIMB 9373 / NCTC 2599 / NRRL B-3711)</name>
    <dbReference type="NCBI Taxonomy" id="226900"/>
    <lineage>
        <taxon>Bacteria</taxon>
        <taxon>Bacillati</taxon>
        <taxon>Bacillota</taxon>
        <taxon>Bacilli</taxon>
        <taxon>Bacillales</taxon>
        <taxon>Bacillaceae</taxon>
        <taxon>Bacillus</taxon>
        <taxon>Bacillus cereus group</taxon>
    </lineage>
</organism>
<protein>
    <recommendedName>
        <fullName evidence="1">Glutamate-1-semialdehyde 2,1-aminomutase 1</fullName>
        <shortName evidence="1">GSA 1</shortName>
        <ecNumber evidence="1">5.4.3.8</ecNumber>
    </recommendedName>
    <alternativeName>
        <fullName evidence="1">Glutamate-1-semialdehyde aminotransferase 1</fullName>
        <shortName evidence="1">GSA-AT 1</shortName>
    </alternativeName>
</protein>
<gene>
    <name evidence="1" type="primary">hemL1</name>
    <name type="ordered locus">BC_0512</name>
</gene>
<proteinExistence type="inferred from homology"/>
<comment type="catalytic activity">
    <reaction evidence="1">
        <text>(S)-4-amino-5-oxopentanoate = 5-aminolevulinate</text>
        <dbReference type="Rhea" id="RHEA:14265"/>
        <dbReference type="ChEBI" id="CHEBI:57501"/>
        <dbReference type="ChEBI" id="CHEBI:356416"/>
        <dbReference type="EC" id="5.4.3.8"/>
    </reaction>
</comment>
<comment type="cofactor">
    <cofactor evidence="1">
        <name>pyridoxal 5'-phosphate</name>
        <dbReference type="ChEBI" id="CHEBI:597326"/>
    </cofactor>
</comment>
<comment type="pathway">
    <text evidence="1">Porphyrin-containing compound metabolism; protoporphyrin-IX biosynthesis; 5-aminolevulinate from L-glutamyl-tRNA(Glu): step 2/2.</text>
</comment>
<comment type="subunit">
    <text evidence="1">Homodimer.</text>
</comment>
<comment type="subcellular location">
    <subcellularLocation>
        <location evidence="1">Cytoplasm</location>
    </subcellularLocation>
</comment>
<comment type="similarity">
    <text evidence="1">Belongs to the class-III pyridoxal-phosphate-dependent aminotransferase family. HemL subfamily.</text>
</comment>
<accession>Q81I85</accession>
<feature type="chain" id="PRO_0000243540" description="Glutamate-1-semialdehyde 2,1-aminomutase 1">
    <location>
        <begin position="1"/>
        <end position="432"/>
    </location>
</feature>
<feature type="modified residue" description="N6-(pyridoxal phosphate)lysine" evidence="1">
    <location>
        <position position="268"/>
    </location>
</feature>
<name>GSA1_BACCR</name>
<evidence type="ECO:0000255" key="1">
    <source>
        <dbReference type="HAMAP-Rule" id="MF_00375"/>
    </source>
</evidence>
<sequence length="432" mass="46206">MNFTKSEALHKEALEHIVGGVNSPSRSFKAVGGGAPVAMERGKGAYFWDVDGNKYIDYLAAYGPIITGHAHPHITKAITTAAENGVLYGTPTALEVKFAKMLKEAMPALDKVRFVNSGTEAVMTTIRVARAYTGRTKIMKFAGCYHGHSDLVLVAAGSGPSTLGTPDSAGVPQSIAQEVITVPFNNVETLKEALDKWGHEVAAILVEPIVGNFGIVEPKPGFLEKVNELVHEAGALVIYDEVITAFRFMYGGAQDLLGVTPDLTALGKVIGGGLPIGAYGGKKEIMEQVAPLGPAYQAGTMAGNPASMASGIACLEVLQQEGLYEKLDELGAMLEKGILEQAAKHNIDITLNRLKGALTVYFTTNTIEDYDAAQDTDGEMFGKFFKLMLQEGVNLAPSKYEAWFLTTEHTKEDIEYTIEAVGRAFAALADNK</sequence>